<sequence>MVVKAVCVINGDAKGTVFFEQESSGTPVKVSGEVCGLAKGLHGFHVHEFGDNTNGCMSSGPHFNPYGKEHGAPVDENRHLGDLGNIEATGDCPTKVNITDSKITLFGADSIIGRTVVVHADADDLGQGGHELSKSTGNAGARIGCGVIGIAKV</sequence>
<feature type="initiator methionine" description="Removed" evidence="1">
    <location>
        <position position="1"/>
    </location>
</feature>
<feature type="chain" id="PRO_0000164095" description="Superoxide dismutase [Cu-Zn]">
    <location>
        <begin position="2"/>
        <end position="153"/>
    </location>
</feature>
<feature type="binding site" evidence="1">
    <location>
        <position position="45"/>
    </location>
    <ligand>
        <name>Cu cation</name>
        <dbReference type="ChEBI" id="CHEBI:23378"/>
        <note>catalytic</note>
    </ligand>
</feature>
<feature type="binding site" evidence="1">
    <location>
        <position position="47"/>
    </location>
    <ligand>
        <name>Cu cation</name>
        <dbReference type="ChEBI" id="CHEBI:23378"/>
        <note>catalytic</note>
    </ligand>
</feature>
<feature type="binding site" evidence="1">
    <location>
        <position position="62"/>
    </location>
    <ligand>
        <name>Cu cation</name>
        <dbReference type="ChEBI" id="CHEBI:23378"/>
        <note>catalytic</note>
    </ligand>
</feature>
<feature type="binding site" evidence="1">
    <location>
        <position position="62"/>
    </location>
    <ligand>
        <name>Zn(2+)</name>
        <dbReference type="ChEBI" id="CHEBI:29105"/>
        <note>structural</note>
    </ligand>
</feature>
<feature type="binding site" evidence="1">
    <location>
        <position position="70"/>
    </location>
    <ligand>
        <name>Zn(2+)</name>
        <dbReference type="ChEBI" id="CHEBI:29105"/>
        <note>structural</note>
    </ligand>
</feature>
<feature type="binding site" evidence="1">
    <location>
        <position position="79"/>
    </location>
    <ligand>
        <name>Zn(2+)</name>
        <dbReference type="ChEBI" id="CHEBI:29105"/>
        <note>structural</note>
    </ligand>
</feature>
<feature type="binding site" evidence="1">
    <location>
        <position position="82"/>
    </location>
    <ligand>
        <name>Zn(2+)</name>
        <dbReference type="ChEBI" id="CHEBI:29105"/>
        <note>structural</note>
    </ligand>
</feature>
<feature type="binding site" evidence="1">
    <location>
        <position position="119"/>
    </location>
    <ligand>
        <name>Cu cation</name>
        <dbReference type="ChEBI" id="CHEBI:23378"/>
        <note>catalytic</note>
    </ligand>
</feature>
<feature type="disulfide bond" evidence="1">
    <location>
        <begin position="56"/>
        <end position="145"/>
    </location>
</feature>
<proteinExistence type="inferred from homology"/>
<organism>
    <name type="scientific">Drosophila simulans</name>
    <name type="common">Fruit fly</name>
    <dbReference type="NCBI Taxonomy" id="7240"/>
    <lineage>
        <taxon>Eukaryota</taxon>
        <taxon>Metazoa</taxon>
        <taxon>Ecdysozoa</taxon>
        <taxon>Arthropoda</taxon>
        <taxon>Hexapoda</taxon>
        <taxon>Insecta</taxon>
        <taxon>Pterygota</taxon>
        <taxon>Neoptera</taxon>
        <taxon>Endopterygota</taxon>
        <taxon>Diptera</taxon>
        <taxon>Brachycera</taxon>
        <taxon>Muscomorpha</taxon>
        <taxon>Ephydroidea</taxon>
        <taxon>Drosophilidae</taxon>
        <taxon>Drosophila</taxon>
        <taxon>Sophophora</taxon>
    </lineage>
</organism>
<gene>
    <name evidence="2" type="primary">Sod1</name>
    <name evidence="2" type="synonym">Sod</name>
    <name type="ORF">GD12822</name>
</gene>
<comment type="function">
    <text>Destroys radicals which are normally produced within the cells and which are toxic to biological systems.</text>
</comment>
<comment type="catalytic activity">
    <reaction>
        <text>2 superoxide + 2 H(+) = H2O2 + O2</text>
        <dbReference type="Rhea" id="RHEA:20696"/>
        <dbReference type="ChEBI" id="CHEBI:15378"/>
        <dbReference type="ChEBI" id="CHEBI:15379"/>
        <dbReference type="ChEBI" id="CHEBI:16240"/>
        <dbReference type="ChEBI" id="CHEBI:18421"/>
        <dbReference type="EC" id="1.15.1.1"/>
    </reaction>
</comment>
<comment type="cofactor">
    <cofactor>
        <name>Cu cation</name>
        <dbReference type="ChEBI" id="CHEBI:23378"/>
    </cofactor>
    <text>Binds 1 copper ion per subunit.</text>
</comment>
<comment type="cofactor">
    <cofactor>
        <name>Zn(2+)</name>
        <dbReference type="ChEBI" id="CHEBI:29105"/>
    </cofactor>
    <text>Binds 1 zinc ion per subunit.</text>
</comment>
<comment type="subunit">
    <text evidence="1">Homodimer.</text>
</comment>
<comment type="subcellular location">
    <subcellularLocation>
        <location evidence="1">Cytoplasm</location>
    </subcellularLocation>
</comment>
<comment type="similarity">
    <text evidence="3">Belongs to the Cu-Zn superoxide dismutase family.</text>
</comment>
<evidence type="ECO:0000250" key="1"/>
<evidence type="ECO:0000250" key="2">
    <source>
        <dbReference type="UniProtKB" id="P61851"/>
    </source>
</evidence>
<evidence type="ECO:0000305" key="3"/>
<reference key="1">
    <citation type="journal article" date="1989" name="Nucleic Acids Res.">
        <title>Drosophila simulans Cu-Zn superoxide dismutase gene sequence.</title>
        <authorList>
            <person name="Kwiatowski J."/>
            <person name="Gonzales F."/>
            <person name="Ayala F.J."/>
        </authorList>
    </citation>
    <scope>NUCLEOTIDE SEQUENCE [GENOMIC DNA]</scope>
</reference>
<reference key="2">
    <citation type="journal article" date="2007" name="Nature">
        <title>Evolution of genes and genomes on the Drosophila phylogeny.</title>
        <authorList>
            <consortium name="Drosophila 12 genomes consortium"/>
        </authorList>
    </citation>
    <scope>NUCLEOTIDE SEQUENCE [LARGE SCALE GENOMIC DNA]</scope>
</reference>
<dbReference type="EC" id="1.15.1.1"/>
<dbReference type="EMBL" id="X15685">
    <property type="protein sequence ID" value="CAA33720.1"/>
    <property type="molecule type" value="Genomic_DNA"/>
</dbReference>
<dbReference type="EMBL" id="CM000363">
    <property type="protein sequence ID" value="EDX10042.1"/>
    <property type="molecule type" value="Genomic_DNA"/>
</dbReference>
<dbReference type="PIR" id="S05498">
    <property type="entry name" value="S05498"/>
</dbReference>
<dbReference type="SMR" id="P61852"/>
<dbReference type="STRING" id="7240.P61852"/>
<dbReference type="EnsemblMetazoa" id="FBtr0212732">
    <property type="protein sequence ID" value="FBpp0211224"/>
    <property type="gene ID" value="FBgn0012854"/>
</dbReference>
<dbReference type="EnsemblMetazoa" id="XM_002084421.4">
    <property type="protein sequence ID" value="XP_002084457.1"/>
    <property type="gene ID" value="LOC6737625"/>
</dbReference>
<dbReference type="GeneID" id="6737625"/>
<dbReference type="CTD" id="6647"/>
<dbReference type="HOGENOM" id="CLU_056632_4_1_1"/>
<dbReference type="OMA" id="AQRGFHI"/>
<dbReference type="OrthoDB" id="2015551at2759"/>
<dbReference type="PhylomeDB" id="P61852"/>
<dbReference type="Proteomes" id="UP000000304">
    <property type="component" value="Chromosome 3L"/>
</dbReference>
<dbReference type="Bgee" id="FBgn0012854">
    <property type="expression patterns" value="Expressed in adult organism and 3 other cell types or tissues"/>
</dbReference>
<dbReference type="GO" id="GO:0005777">
    <property type="term" value="C:peroxisome"/>
    <property type="evidence" value="ECO:0007669"/>
    <property type="project" value="EnsemblMetazoa"/>
</dbReference>
<dbReference type="GO" id="GO:0005507">
    <property type="term" value="F:copper ion binding"/>
    <property type="evidence" value="ECO:0007669"/>
    <property type="project" value="InterPro"/>
</dbReference>
<dbReference type="GO" id="GO:0042803">
    <property type="term" value="F:protein homodimerization activity"/>
    <property type="evidence" value="ECO:0007669"/>
    <property type="project" value="EnsemblMetazoa"/>
</dbReference>
<dbReference type="GO" id="GO:0004784">
    <property type="term" value="F:superoxide dismutase activity"/>
    <property type="evidence" value="ECO:0007669"/>
    <property type="project" value="UniProtKB-EC"/>
</dbReference>
<dbReference type="GO" id="GO:0008340">
    <property type="term" value="P:determination of adult lifespan"/>
    <property type="evidence" value="ECO:0007669"/>
    <property type="project" value="EnsemblMetazoa"/>
</dbReference>
<dbReference type="GO" id="GO:1901526">
    <property type="term" value="P:positive regulation of mitophagy"/>
    <property type="evidence" value="ECO:0007669"/>
    <property type="project" value="EnsemblMetazoa"/>
</dbReference>
<dbReference type="GO" id="GO:0048167">
    <property type="term" value="P:regulation of synaptic plasticity"/>
    <property type="evidence" value="ECO:0007669"/>
    <property type="project" value="EnsemblMetazoa"/>
</dbReference>
<dbReference type="CDD" id="cd00305">
    <property type="entry name" value="Cu-Zn_Superoxide_Dismutase"/>
    <property type="match status" value="1"/>
</dbReference>
<dbReference type="FunFam" id="2.60.40.200:FF:000001">
    <property type="entry name" value="Superoxide dismutase [Cu-Zn]"/>
    <property type="match status" value="1"/>
</dbReference>
<dbReference type="Gene3D" id="2.60.40.200">
    <property type="entry name" value="Superoxide dismutase, copper/zinc binding domain"/>
    <property type="match status" value="1"/>
</dbReference>
<dbReference type="InterPro" id="IPR036423">
    <property type="entry name" value="SOD-like_Cu/Zn_dom_sf"/>
</dbReference>
<dbReference type="InterPro" id="IPR024134">
    <property type="entry name" value="SOD_Cu/Zn_/chaperone"/>
</dbReference>
<dbReference type="InterPro" id="IPR018152">
    <property type="entry name" value="SOD_Cu/Zn_BS"/>
</dbReference>
<dbReference type="InterPro" id="IPR001424">
    <property type="entry name" value="SOD_Cu_Zn_dom"/>
</dbReference>
<dbReference type="PANTHER" id="PTHR10003">
    <property type="entry name" value="SUPEROXIDE DISMUTASE CU-ZN -RELATED"/>
    <property type="match status" value="1"/>
</dbReference>
<dbReference type="Pfam" id="PF00080">
    <property type="entry name" value="Sod_Cu"/>
    <property type="match status" value="1"/>
</dbReference>
<dbReference type="PRINTS" id="PR00068">
    <property type="entry name" value="CUZNDISMTASE"/>
</dbReference>
<dbReference type="SUPFAM" id="SSF49329">
    <property type="entry name" value="Cu,Zn superoxide dismutase-like"/>
    <property type="match status" value="1"/>
</dbReference>
<dbReference type="PROSITE" id="PS00087">
    <property type="entry name" value="SOD_CU_ZN_1"/>
    <property type="match status" value="1"/>
</dbReference>
<dbReference type="PROSITE" id="PS00332">
    <property type="entry name" value="SOD_CU_ZN_2"/>
    <property type="match status" value="1"/>
</dbReference>
<accession>P61852</accession>
<accession>B4QPQ1</accession>
<accession>P00444</accession>
<accession>Q9VTF6</accession>
<protein>
    <recommendedName>
        <fullName evidence="2">Superoxide dismutase [Cu-Zn]</fullName>
        <ecNumber>1.15.1.1</ecNumber>
    </recommendedName>
    <alternativeName>
        <fullName evidence="2">Superoxide dismutase 1</fullName>
    </alternativeName>
</protein>
<name>SODC_DROSI</name>
<keyword id="KW-0049">Antioxidant</keyword>
<keyword id="KW-0186">Copper</keyword>
<keyword id="KW-0963">Cytoplasm</keyword>
<keyword id="KW-1015">Disulfide bond</keyword>
<keyword id="KW-0479">Metal-binding</keyword>
<keyword id="KW-0560">Oxidoreductase</keyword>
<keyword id="KW-1185">Reference proteome</keyword>
<keyword id="KW-0862">Zinc</keyword>